<proteinExistence type="inferred from homology"/>
<name>LIS1_PARBD</name>
<sequence>MSQLLTARQAEELHKAMIAYLLSANLPKSAAALREELADSVQLDDSTAKKYEGLLEKKWTSVVRLQKKIMDLESRNNALQSELDSATPTSLARRNQDPVSWLPHAPARHILQSHREPVTCVGFHPVFSSLASGSDDTTIKIWDWELGELERTIKGHTKAVLDVDYGGPRGGTLLASCSSDLTIKLWDPSDGYKNIRTLPGHDHSVSAVRFIPSGAAGSPLSGNLLVSASRDKTLRIWDVTTGYCVKTLRGHVDWVRDVAASPDGRFLFSAGNDQVARLWDVSSGETKSTFLGHEHAVECVAFAPPTSYPHLSALAGLKKAPPSSSSAEYVATGSRDKSIRIWDARGTLIKTLIGHDNWVRALAFHPGGKYLLSVSDDKTLRCWDLTQECKCVRTVKDAHGHFISCIRWAPNIIKDAGVVNGDDTSTAASANGGALAASAINGVVPTGKKEDPGGGPMMGIRCVIATGSVDLKVRVFAS</sequence>
<gene>
    <name evidence="1" type="primary">PAC1</name>
    <name evidence="1" type="synonym">LIS1</name>
    <name type="ORF">PADG_04850</name>
</gene>
<reference key="1">
    <citation type="journal article" date="2011" name="PLoS Genet.">
        <title>Comparative genomic analysis of human fungal pathogens causing paracoccidioidomycosis.</title>
        <authorList>
            <person name="Desjardins C.A."/>
            <person name="Champion M.D."/>
            <person name="Holder J.W."/>
            <person name="Muszewska A."/>
            <person name="Goldberg J."/>
            <person name="Bailao A.M."/>
            <person name="Brigido M.M."/>
            <person name="Ferreira M.E."/>
            <person name="Garcia A.M."/>
            <person name="Grynberg M."/>
            <person name="Gujja S."/>
            <person name="Heiman D.I."/>
            <person name="Henn M.R."/>
            <person name="Kodira C.D."/>
            <person name="Leon-Narvaez H."/>
            <person name="Longo L.V.G."/>
            <person name="Ma L.-J."/>
            <person name="Malavazi I."/>
            <person name="Matsuo A.L."/>
            <person name="Morais F.V."/>
            <person name="Pereira M."/>
            <person name="Rodriguez-Brito S."/>
            <person name="Sakthikumar S."/>
            <person name="Salem-Izacc S.M."/>
            <person name="Sykes S.M."/>
            <person name="Teixeira M.M."/>
            <person name="Vallejo M.C."/>
            <person name="Walter M.E."/>
            <person name="Yandava C."/>
            <person name="Young S."/>
            <person name="Zeng Q."/>
            <person name="Zucker J."/>
            <person name="Felipe M.S."/>
            <person name="Goldman G.H."/>
            <person name="Haas B.J."/>
            <person name="McEwen J.G."/>
            <person name="Nino-Vega G."/>
            <person name="Puccia R."/>
            <person name="San-Blas G."/>
            <person name="Soares C.M."/>
            <person name="Birren B.W."/>
            <person name="Cuomo C.A."/>
        </authorList>
    </citation>
    <scope>NUCLEOTIDE SEQUENCE [LARGE SCALE GENOMIC DNA]</scope>
    <source>
        <strain>Pb18</strain>
    </source>
</reference>
<evidence type="ECO:0000255" key="1">
    <source>
        <dbReference type="HAMAP-Rule" id="MF_03141"/>
    </source>
</evidence>
<comment type="function">
    <text evidence="1">Positively regulates the activity of the minus-end directed microtubule motor protein dynein. May enhance dynein-mediated microtubule sliding by targeting dynein to the microtubule plus end. Required for nuclear migration during vegetative growth as well as development. Required for retrograde early endosome (EE) transport from the hyphal tip. Required for localization of dynein to the mitotic spindle poles. Recruits additional proteins to the dynein complex at SPBs.</text>
</comment>
<comment type="subunit">
    <text evidence="1">Self-associates. Interacts with NDL1 and dynein.</text>
</comment>
<comment type="subcellular location">
    <subcellularLocation>
        <location evidence="1">Cytoplasm</location>
        <location evidence="1">Cytoskeleton</location>
    </subcellularLocation>
    <subcellularLocation>
        <location evidence="1">Cytoplasm</location>
        <location evidence="1">Cytoskeleton</location>
        <location evidence="1">Spindle pole</location>
    </subcellularLocation>
    <text evidence="1">Localizes to the plus ends of microtubules at the hyphal tip and the mitotic spindle poles.</text>
</comment>
<comment type="domain">
    <text evidence="1">Dimerization mediated by the LisH domain may be required to activate dynein.</text>
</comment>
<comment type="similarity">
    <text evidence="1">Belongs to the WD repeat LIS1/nudF family.</text>
</comment>
<organism>
    <name type="scientific">Paracoccidioides brasiliensis (strain Pb18)</name>
    <dbReference type="NCBI Taxonomy" id="502780"/>
    <lineage>
        <taxon>Eukaryota</taxon>
        <taxon>Fungi</taxon>
        <taxon>Dikarya</taxon>
        <taxon>Ascomycota</taxon>
        <taxon>Pezizomycotina</taxon>
        <taxon>Eurotiomycetes</taxon>
        <taxon>Eurotiomycetidae</taxon>
        <taxon>Onygenales</taxon>
        <taxon>Ajellomycetaceae</taxon>
        <taxon>Paracoccidioides</taxon>
    </lineage>
</organism>
<accession>C1GB49</accession>
<keyword id="KW-0131">Cell cycle</keyword>
<keyword id="KW-0132">Cell division</keyword>
<keyword id="KW-0175">Coiled coil</keyword>
<keyword id="KW-0963">Cytoplasm</keyword>
<keyword id="KW-0206">Cytoskeleton</keyword>
<keyword id="KW-0493">Microtubule</keyword>
<keyword id="KW-0498">Mitosis</keyword>
<keyword id="KW-1185">Reference proteome</keyword>
<keyword id="KW-0677">Repeat</keyword>
<keyword id="KW-0813">Transport</keyword>
<keyword id="KW-0853">WD repeat</keyword>
<protein>
    <recommendedName>
        <fullName evidence="1">Nuclear distribution protein PAC1</fullName>
    </recommendedName>
    <alternativeName>
        <fullName evidence="1">Lissencephaly-1 homolog</fullName>
        <shortName evidence="1">LIS-1</shortName>
    </alternativeName>
    <alternativeName>
        <fullName evidence="1">nudF homolog</fullName>
    </alternativeName>
</protein>
<dbReference type="EMBL" id="KN275961">
    <property type="protein sequence ID" value="EEH48771.1"/>
    <property type="molecule type" value="Genomic_DNA"/>
</dbReference>
<dbReference type="RefSeq" id="XP_010760408.1">
    <property type="nucleotide sequence ID" value="XM_010762106.1"/>
</dbReference>
<dbReference type="SMR" id="C1GB49"/>
<dbReference type="FunCoup" id="C1GB49">
    <property type="interactions" value="49"/>
</dbReference>
<dbReference type="STRING" id="502780.C1GB49"/>
<dbReference type="GeneID" id="22583883"/>
<dbReference type="KEGG" id="pbn:PADG_04850"/>
<dbReference type="VEuPathDB" id="FungiDB:PADG_04850"/>
<dbReference type="eggNOG" id="KOG0295">
    <property type="taxonomic scope" value="Eukaryota"/>
</dbReference>
<dbReference type="HOGENOM" id="CLU_000288_57_15_1"/>
<dbReference type="InParanoid" id="C1GB49"/>
<dbReference type="OMA" id="WHVATKE"/>
<dbReference type="OrthoDB" id="24525at33183"/>
<dbReference type="Proteomes" id="UP000001628">
    <property type="component" value="Unassembled WGS sequence"/>
</dbReference>
<dbReference type="GO" id="GO:0005737">
    <property type="term" value="C:cytoplasm"/>
    <property type="evidence" value="ECO:0007669"/>
    <property type="project" value="UniProtKB-UniRule"/>
</dbReference>
<dbReference type="GO" id="GO:0005874">
    <property type="term" value="C:microtubule"/>
    <property type="evidence" value="ECO:0007669"/>
    <property type="project" value="UniProtKB-KW"/>
</dbReference>
<dbReference type="GO" id="GO:0005875">
    <property type="term" value="C:microtubule associated complex"/>
    <property type="evidence" value="ECO:0007669"/>
    <property type="project" value="UniProtKB-UniRule"/>
</dbReference>
<dbReference type="GO" id="GO:0000922">
    <property type="term" value="C:spindle pole"/>
    <property type="evidence" value="ECO:0007669"/>
    <property type="project" value="UniProtKB-SubCell"/>
</dbReference>
<dbReference type="GO" id="GO:1990234">
    <property type="term" value="C:transferase complex"/>
    <property type="evidence" value="ECO:0007669"/>
    <property type="project" value="UniProtKB-ARBA"/>
</dbReference>
<dbReference type="GO" id="GO:0070840">
    <property type="term" value="F:dynein complex binding"/>
    <property type="evidence" value="ECO:0007669"/>
    <property type="project" value="UniProtKB-UniRule"/>
</dbReference>
<dbReference type="GO" id="GO:0051301">
    <property type="term" value="P:cell division"/>
    <property type="evidence" value="ECO:0007669"/>
    <property type="project" value="UniProtKB-KW"/>
</dbReference>
<dbReference type="GO" id="GO:0000132">
    <property type="term" value="P:establishment of mitotic spindle orientation"/>
    <property type="evidence" value="ECO:0007669"/>
    <property type="project" value="UniProtKB-UniRule"/>
</dbReference>
<dbReference type="GO" id="GO:0051012">
    <property type="term" value="P:microtubule sliding"/>
    <property type="evidence" value="ECO:0007669"/>
    <property type="project" value="UniProtKB-UniRule"/>
</dbReference>
<dbReference type="CDD" id="cd00200">
    <property type="entry name" value="WD40"/>
    <property type="match status" value="1"/>
</dbReference>
<dbReference type="FunFam" id="1.20.960.30:FF:000002">
    <property type="entry name" value="Platelet-activating factor acetylhydrolase ib"/>
    <property type="match status" value="1"/>
</dbReference>
<dbReference type="Gene3D" id="1.20.960.30">
    <property type="match status" value="1"/>
</dbReference>
<dbReference type="Gene3D" id="2.130.10.10">
    <property type="entry name" value="YVTN repeat-like/Quinoprotein amine dehydrogenase"/>
    <property type="match status" value="1"/>
</dbReference>
<dbReference type="HAMAP" id="MF_03141">
    <property type="entry name" value="lis1"/>
    <property type="match status" value="1"/>
</dbReference>
<dbReference type="InterPro" id="IPR017252">
    <property type="entry name" value="Dynein_regulator_LIS1"/>
</dbReference>
<dbReference type="InterPro" id="IPR020472">
    <property type="entry name" value="G-protein_beta_WD-40_rep"/>
</dbReference>
<dbReference type="InterPro" id="IPR037190">
    <property type="entry name" value="LIS1_N"/>
</dbReference>
<dbReference type="InterPro" id="IPR006594">
    <property type="entry name" value="LisH"/>
</dbReference>
<dbReference type="InterPro" id="IPR056795">
    <property type="entry name" value="PAC1-like_LisH-like_dom"/>
</dbReference>
<dbReference type="InterPro" id="IPR015943">
    <property type="entry name" value="WD40/YVTN_repeat-like_dom_sf"/>
</dbReference>
<dbReference type="InterPro" id="IPR019775">
    <property type="entry name" value="WD40_repeat_CS"/>
</dbReference>
<dbReference type="InterPro" id="IPR036322">
    <property type="entry name" value="WD40_repeat_dom_sf"/>
</dbReference>
<dbReference type="InterPro" id="IPR001680">
    <property type="entry name" value="WD40_rpt"/>
</dbReference>
<dbReference type="PANTHER" id="PTHR22847:SF637">
    <property type="entry name" value="WD REPEAT DOMAIN 5B"/>
    <property type="match status" value="1"/>
</dbReference>
<dbReference type="PANTHER" id="PTHR22847">
    <property type="entry name" value="WD40 REPEAT PROTEIN"/>
    <property type="match status" value="1"/>
</dbReference>
<dbReference type="Pfam" id="PF24951">
    <property type="entry name" value="LisH_PAC1"/>
    <property type="match status" value="1"/>
</dbReference>
<dbReference type="Pfam" id="PF00400">
    <property type="entry name" value="WD40"/>
    <property type="match status" value="6"/>
</dbReference>
<dbReference type="PIRSF" id="PIRSF037647">
    <property type="entry name" value="Dynein_regulator_Lis1"/>
    <property type="match status" value="1"/>
</dbReference>
<dbReference type="PRINTS" id="PR00320">
    <property type="entry name" value="GPROTEINBRPT"/>
</dbReference>
<dbReference type="SMART" id="SM00320">
    <property type="entry name" value="WD40"/>
    <property type="match status" value="7"/>
</dbReference>
<dbReference type="SUPFAM" id="SSF109925">
    <property type="entry name" value="Lissencephaly-1 protein (Lis-1, PAF-AH alpha) N-terminal domain"/>
    <property type="match status" value="1"/>
</dbReference>
<dbReference type="SUPFAM" id="SSF50978">
    <property type="entry name" value="WD40 repeat-like"/>
    <property type="match status" value="1"/>
</dbReference>
<dbReference type="PROSITE" id="PS50896">
    <property type="entry name" value="LISH"/>
    <property type="match status" value="1"/>
</dbReference>
<dbReference type="PROSITE" id="PS00678">
    <property type="entry name" value="WD_REPEATS_1"/>
    <property type="match status" value="3"/>
</dbReference>
<dbReference type="PROSITE" id="PS50082">
    <property type="entry name" value="WD_REPEATS_2"/>
    <property type="match status" value="6"/>
</dbReference>
<dbReference type="PROSITE" id="PS50294">
    <property type="entry name" value="WD_REPEATS_REGION"/>
    <property type="match status" value="1"/>
</dbReference>
<feature type="chain" id="PRO_0000405087" description="Nuclear distribution protein PAC1">
    <location>
        <begin position="1"/>
        <end position="478"/>
    </location>
</feature>
<feature type="domain" description="LisH" evidence="1">
    <location>
        <begin position="9"/>
        <end position="41"/>
    </location>
</feature>
<feature type="repeat" description="WD 1">
    <location>
        <begin position="113"/>
        <end position="154"/>
    </location>
</feature>
<feature type="repeat" description="WD 2">
    <location>
        <begin position="156"/>
        <end position="196"/>
    </location>
</feature>
<feature type="repeat" description="WD 3">
    <location>
        <begin position="200"/>
        <end position="247"/>
    </location>
</feature>
<feature type="repeat" description="WD 4">
    <location>
        <begin position="250"/>
        <end position="289"/>
    </location>
</feature>
<feature type="repeat" description="WD 5">
    <location>
        <begin position="292"/>
        <end position="352"/>
    </location>
</feature>
<feature type="repeat" description="WD 6">
    <location>
        <begin position="354"/>
        <end position="393"/>
    </location>
</feature>
<feature type="repeat" description="WD 7">
    <location>
        <begin position="398"/>
        <end position="439"/>
    </location>
</feature>
<feature type="repeat" description="WD 8">
    <location>
        <begin position="440"/>
        <end position="477"/>
    </location>
</feature>
<feature type="coiled-coil region" evidence="1">
    <location>
        <begin position="60"/>
        <end position="87"/>
    </location>
</feature>